<keyword id="KW-0963">Cytoplasm</keyword>
<keyword id="KW-0489">Methyltransferase</keyword>
<keyword id="KW-1185">Reference proteome</keyword>
<keyword id="KW-0698">rRNA processing</keyword>
<keyword id="KW-0949">S-adenosyl-L-methionine</keyword>
<keyword id="KW-0808">Transferase</keyword>
<reference key="1">
    <citation type="journal article" date="2004" name="Science">
        <title>The genomic sequence of the accidental pathogen Legionella pneumophila.</title>
        <authorList>
            <person name="Chien M."/>
            <person name="Morozova I."/>
            <person name="Shi S."/>
            <person name="Sheng H."/>
            <person name="Chen J."/>
            <person name="Gomez S.M."/>
            <person name="Asamani G."/>
            <person name="Hill K."/>
            <person name="Nuara J."/>
            <person name="Feder M."/>
            <person name="Rineer J."/>
            <person name="Greenberg J.J."/>
            <person name="Steshenko V."/>
            <person name="Park S.H."/>
            <person name="Zhao B."/>
            <person name="Teplitskaya E."/>
            <person name="Edwards J.R."/>
            <person name="Pampou S."/>
            <person name="Georghiou A."/>
            <person name="Chou I.-C."/>
            <person name="Iannuccilli W."/>
            <person name="Ulz M.E."/>
            <person name="Kim D.H."/>
            <person name="Geringer-Sameth A."/>
            <person name="Goldsberry C."/>
            <person name="Morozov P."/>
            <person name="Fischer S.G."/>
            <person name="Segal G."/>
            <person name="Qu X."/>
            <person name="Rzhetsky A."/>
            <person name="Zhang P."/>
            <person name="Cayanis E."/>
            <person name="De Jong P.J."/>
            <person name="Ju J."/>
            <person name="Kalachikov S."/>
            <person name="Shuman H.A."/>
            <person name="Russo J.J."/>
        </authorList>
    </citation>
    <scope>NUCLEOTIDE SEQUENCE [LARGE SCALE GENOMIC DNA]</scope>
    <source>
        <strain>Philadelphia 1 / ATCC 33152 / DSM 7513</strain>
    </source>
</reference>
<gene>
    <name evidence="1" type="primary">rsmH</name>
    <name type="synonym">mraW</name>
    <name type="ordered locus">lpg0914</name>
</gene>
<evidence type="ECO:0000255" key="1">
    <source>
        <dbReference type="HAMAP-Rule" id="MF_01007"/>
    </source>
</evidence>
<evidence type="ECO:0000305" key="2"/>
<comment type="function">
    <text evidence="1">Specifically methylates the N4 position of cytidine in position 1402 (C1402) of 16S rRNA.</text>
</comment>
<comment type="catalytic activity">
    <reaction evidence="1">
        <text>cytidine(1402) in 16S rRNA + S-adenosyl-L-methionine = N(4)-methylcytidine(1402) in 16S rRNA + S-adenosyl-L-homocysteine + H(+)</text>
        <dbReference type="Rhea" id="RHEA:42928"/>
        <dbReference type="Rhea" id="RHEA-COMP:10286"/>
        <dbReference type="Rhea" id="RHEA-COMP:10287"/>
        <dbReference type="ChEBI" id="CHEBI:15378"/>
        <dbReference type="ChEBI" id="CHEBI:57856"/>
        <dbReference type="ChEBI" id="CHEBI:59789"/>
        <dbReference type="ChEBI" id="CHEBI:74506"/>
        <dbReference type="ChEBI" id="CHEBI:82748"/>
        <dbReference type="EC" id="2.1.1.199"/>
    </reaction>
</comment>
<comment type="subcellular location">
    <subcellularLocation>
        <location evidence="1">Cytoplasm</location>
    </subcellularLocation>
</comment>
<comment type="similarity">
    <text evidence="1">Belongs to the methyltransferase superfamily. RsmH family.</text>
</comment>
<comment type="sequence caution" evidence="2">
    <conflict type="erroneous initiation">
        <sequence resource="EMBL-CDS" id="AAU27001"/>
    </conflict>
</comment>
<sequence>MAKHQSVLLHESIKGLAIKADGIYFDGTFGRGGHSREILNHLSDKGRLFAIDKDLDAVQYAKDYFGLDKRFQIFHGSFAQIKEFASQAGVIGAVDGILLDLGVSSPQLDNPERGFSFMLQGPLDMRMDLTQSINAANFVNEAEVNELAHVFRAYGEERFAGRIAKAIVDARKLKPITTTLELAEIVKEANPKWEKHKHPATRVFQAIRIHVNQELTDLSNCLEQCLDVLGPGGRLAVISFHSLEDRIVKQFMRDKEQGNRPPVEVPIKYEELKTNFKKVGKAVKPQSSEIKENVRSRSAVLRIGEKLA</sequence>
<name>RSMH_LEGPH</name>
<accession>Q5ZX19</accession>
<proteinExistence type="inferred from homology"/>
<feature type="chain" id="PRO_0000108646" description="Ribosomal RNA small subunit methyltransferase H">
    <location>
        <begin position="1"/>
        <end position="308"/>
    </location>
</feature>
<feature type="binding site" evidence="1">
    <location>
        <begin position="32"/>
        <end position="34"/>
    </location>
    <ligand>
        <name>S-adenosyl-L-methionine</name>
        <dbReference type="ChEBI" id="CHEBI:59789"/>
    </ligand>
</feature>
<feature type="binding site" evidence="1">
    <location>
        <position position="52"/>
    </location>
    <ligand>
        <name>S-adenosyl-L-methionine</name>
        <dbReference type="ChEBI" id="CHEBI:59789"/>
    </ligand>
</feature>
<feature type="binding site" evidence="1">
    <location>
        <position position="78"/>
    </location>
    <ligand>
        <name>S-adenosyl-L-methionine</name>
        <dbReference type="ChEBI" id="CHEBI:59789"/>
    </ligand>
</feature>
<feature type="binding site" evidence="1">
    <location>
        <position position="100"/>
    </location>
    <ligand>
        <name>S-adenosyl-L-methionine</name>
        <dbReference type="ChEBI" id="CHEBI:59789"/>
    </ligand>
</feature>
<feature type="binding site" evidence="1">
    <location>
        <position position="107"/>
    </location>
    <ligand>
        <name>S-adenosyl-L-methionine</name>
        <dbReference type="ChEBI" id="CHEBI:59789"/>
    </ligand>
</feature>
<organism>
    <name type="scientific">Legionella pneumophila subsp. pneumophila (strain Philadelphia 1 / ATCC 33152 / DSM 7513)</name>
    <dbReference type="NCBI Taxonomy" id="272624"/>
    <lineage>
        <taxon>Bacteria</taxon>
        <taxon>Pseudomonadati</taxon>
        <taxon>Pseudomonadota</taxon>
        <taxon>Gammaproteobacteria</taxon>
        <taxon>Legionellales</taxon>
        <taxon>Legionellaceae</taxon>
        <taxon>Legionella</taxon>
    </lineage>
</organism>
<protein>
    <recommendedName>
        <fullName evidence="1">Ribosomal RNA small subunit methyltransferase H</fullName>
        <ecNumber evidence="1">2.1.1.199</ecNumber>
    </recommendedName>
    <alternativeName>
        <fullName evidence="1">16S rRNA m(4)C1402 methyltransferase</fullName>
    </alternativeName>
    <alternativeName>
        <fullName evidence="1">rRNA (cytosine-N(4)-)-methyltransferase RsmH</fullName>
    </alternativeName>
</protein>
<dbReference type="EC" id="2.1.1.199" evidence="1"/>
<dbReference type="EMBL" id="AE017354">
    <property type="protein sequence ID" value="AAU27001.1"/>
    <property type="status" value="ALT_INIT"/>
    <property type="molecule type" value="Genomic_DNA"/>
</dbReference>
<dbReference type="RefSeq" id="WP_011213344.1">
    <property type="nucleotide sequence ID" value="NC_002942.5"/>
</dbReference>
<dbReference type="RefSeq" id="YP_094948.1">
    <property type="nucleotide sequence ID" value="NC_002942.5"/>
</dbReference>
<dbReference type="SMR" id="Q5ZX19"/>
<dbReference type="STRING" id="272624.lpg0914"/>
<dbReference type="PaxDb" id="272624-lpg0914"/>
<dbReference type="GeneID" id="57034902"/>
<dbReference type="KEGG" id="lpn:lpg0914"/>
<dbReference type="PATRIC" id="fig|272624.6.peg.946"/>
<dbReference type="eggNOG" id="COG0275">
    <property type="taxonomic scope" value="Bacteria"/>
</dbReference>
<dbReference type="HOGENOM" id="CLU_038422_2_0_6"/>
<dbReference type="OrthoDB" id="9806637at2"/>
<dbReference type="Proteomes" id="UP000000609">
    <property type="component" value="Chromosome"/>
</dbReference>
<dbReference type="GO" id="GO:0005737">
    <property type="term" value="C:cytoplasm"/>
    <property type="evidence" value="ECO:0007669"/>
    <property type="project" value="UniProtKB-SubCell"/>
</dbReference>
<dbReference type="GO" id="GO:0071424">
    <property type="term" value="F:rRNA (cytosine-N4-)-methyltransferase activity"/>
    <property type="evidence" value="ECO:0007669"/>
    <property type="project" value="UniProtKB-UniRule"/>
</dbReference>
<dbReference type="GO" id="GO:0070475">
    <property type="term" value="P:rRNA base methylation"/>
    <property type="evidence" value="ECO:0007669"/>
    <property type="project" value="UniProtKB-UniRule"/>
</dbReference>
<dbReference type="FunFam" id="1.10.150.170:FF:000001">
    <property type="entry name" value="Ribosomal RNA small subunit methyltransferase H"/>
    <property type="match status" value="1"/>
</dbReference>
<dbReference type="Gene3D" id="1.10.150.170">
    <property type="entry name" value="Putative methyltransferase TM0872, insert domain"/>
    <property type="match status" value="1"/>
</dbReference>
<dbReference type="Gene3D" id="3.40.50.150">
    <property type="entry name" value="Vaccinia Virus protein VP39"/>
    <property type="match status" value="1"/>
</dbReference>
<dbReference type="HAMAP" id="MF_01007">
    <property type="entry name" value="16SrRNA_methyltr_H"/>
    <property type="match status" value="1"/>
</dbReference>
<dbReference type="InterPro" id="IPR002903">
    <property type="entry name" value="RsmH"/>
</dbReference>
<dbReference type="InterPro" id="IPR023397">
    <property type="entry name" value="SAM-dep_MeTrfase_MraW_recog"/>
</dbReference>
<dbReference type="InterPro" id="IPR029063">
    <property type="entry name" value="SAM-dependent_MTases_sf"/>
</dbReference>
<dbReference type="NCBIfam" id="TIGR00006">
    <property type="entry name" value="16S rRNA (cytosine(1402)-N(4))-methyltransferase RsmH"/>
    <property type="match status" value="1"/>
</dbReference>
<dbReference type="PANTHER" id="PTHR11265:SF0">
    <property type="entry name" value="12S RRNA N4-METHYLCYTIDINE METHYLTRANSFERASE"/>
    <property type="match status" value="1"/>
</dbReference>
<dbReference type="PANTHER" id="PTHR11265">
    <property type="entry name" value="S-ADENOSYL-METHYLTRANSFERASE MRAW"/>
    <property type="match status" value="1"/>
</dbReference>
<dbReference type="Pfam" id="PF01795">
    <property type="entry name" value="Methyltransf_5"/>
    <property type="match status" value="1"/>
</dbReference>
<dbReference type="PIRSF" id="PIRSF004486">
    <property type="entry name" value="MraW"/>
    <property type="match status" value="1"/>
</dbReference>
<dbReference type="SUPFAM" id="SSF81799">
    <property type="entry name" value="Putative methyltransferase TM0872, insert domain"/>
    <property type="match status" value="1"/>
</dbReference>
<dbReference type="SUPFAM" id="SSF53335">
    <property type="entry name" value="S-adenosyl-L-methionine-dependent methyltransferases"/>
    <property type="match status" value="1"/>
</dbReference>